<proteinExistence type="inferred from homology"/>
<dbReference type="EMBL" id="AM040264">
    <property type="protein sequence ID" value="CAJ12079.1"/>
    <property type="molecule type" value="Genomic_DNA"/>
</dbReference>
<dbReference type="RefSeq" id="WP_002965184.1">
    <property type="nucleotide sequence ID" value="NZ_KN046823.1"/>
</dbReference>
<dbReference type="SMR" id="Q2YQV8"/>
<dbReference type="STRING" id="359391.BAB1_2123"/>
<dbReference type="GeneID" id="93017574"/>
<dbReference type="KEGG" id="bmf:BAB1_2123"/>
<dbReference type="PATRIC" id="fig|359391.11.peg.1355"/>
<dbReference type="HOGENOM" id="CLU_169643_2_1_5"/>
<dbReference type="Proteomes" id="UP000002719">
    <property type="component" value="Chromosome I"/>
</dbReference>
<dbReference type="GO" id="GO:0022625">
    <property type="term" value="C:cytosolic large ribosomal subunit"/>
    <property type="evidence" value="ECO:0007669"/>
    <property type="project" value="TreeGrafter"/>
</dbReference>
<dbReference type="GO" id="GO:0003735">
    <property type="term" value="F:structural constituent of ribosome"/>
    <property type="evidence" value="ECO:0007669"/>
    <property type="project" value="InterPro"/>
</dbReference>
<dbReference type="GO" id="GO:0006412">
    <property type="term" value="P:translation"/>
    <property type="evidence" value="ECO:0007669"/>
    <property type="project" value="UniProtKB-UniRule"/>
</dbReference>
<dbReference type="FunFam" id="4.10.410.60:FF:000001">
    <property type="entry name" value="50S ribosomal protein L35"/>
    <property type="match status" value="1"/>
</dbReference>
<dbReference type="Gene3D" id="4.10.410.60">
    <property type="match status" value="1"/>
</dbReference>
<dbReference type="HAMAP" id="MF_00514">
    <property type="entry name" value="Ribosomal_bL35"/>
    <property type="match status" value="1"/>
</dbReference>
<dbReference type="InterPro" id="IPR001706">
    <property type="entry name" value="Ribosomal_bL35"/>
</dbReference>
<dbReference type="InterPro" id="IPR021137">
    <property type="entry name" value="Ribosomal_bL35-like"/>
</dbReference>
<dbReference type="InterPro" id="IPR018265">
    <property type="entry name" value="Ribosomal_bL35_CS"/>
</dbReference>
<dbReference type="InterPro" id="IPR037229">
    <property type="entry name" value="Ribosomal_bL35_sf"/>
</dbReference>
<dbReference type="NCBIfam" id="TIGR00001">
    <property type="entry name" value="rpmI_bact"/>
    <property type="match status" value="1"/>
</dbReference>
<dbReference type="PANTHER" id="PTHR33343">
    <property type="entry name" value="54S RIBOSOMAL PROTEIN BL35M"/>
    <property type="match status" value="1"/>
</dbReference>
<dbReference type="PANTHER" id="PTHR33343:SF1">
    <property type="entry name" value="LARGE RIBOSOMAL SUBUNIT PROTEIN BL35M"/>
    <property type="match status" value="1"/>
</dbReference>
<dbReference type="Pfam" id="PF01632">
    <property type="entry name" value="Ribosomal_L35p"/>
    <property type="match status" value="1"/>
</dbReference>
<dbReference type="PRINTS" id="PR00064">
    <property type="entry name" value="RIBOSOMALL35"/>
</dbReference>
<dbReference type="SUPFAM" id="SSF143034">
    <property type="entry name" value="L35p-like"/>
    <property type="match status" value="1"/>
</dbReference>
<dbReference type="PROSITE" id="PS00936">
    <property type="entry name" value="RIBOSOMAL_L35"/>
    <property type="match status" value="1"/>
</dbReference>
<reference key="1">
    <citation type="journal article" date="2005" name="Infect. Immun.">
        <title>Whole-genome analyses of speciation events in pathogenic Brucellae.</title>
        <authorList>
            <person name="Chain P.S."/>
            <person name="Comerci D.J."/>
            <person name="Tolmasky M.E."/>
            <person name="Larimer F.W."/>
            <person name="Malfatti S.A."/>
            <person name="Vergez L.M."/>
            <person name="Aguero F."/>
            <person name="Land M.L."/>
            <person name="Ugalde R.A."/>
            <person name="Garcia E."/>
        </authorList>
    </citation>
    <scope>NUCLEOTIDE SEQUENCE [LARGE SCALE GENOMIC DNA]</scope>
    <source>
        <strain>2308</strain>
    </source>
</reference>
<accession>Q2YQV8</accession>
<evidence type="ECO:0000255" key="1">
    <source>
        <dbReference type="HAMAP-Rule" id="MF_00514"/>
    </source>
</evidence>
<evidence type="ECO:0000305" key="2"/>
<name>RL35_BRUA2</name>
<protein>
    <recommendedName>
        <fullName evidence="1">Large ribosomal subunit protein bL35</fullName>
    </recommendedName>
    <alternativeName>
        <fullName evidence="2">50S ribosomal protein L35</fullName>
    </alternativeName>
</protein>
<gene>
    <name evidence="1" type="primary">rpmI</name>
    <name type="ordered locus">BAB1_2123</name>
</gene>
<keyword id="KW-1185">Reference proteome</keyword>
<keyword id="KW-0687">Ribonucleoprotein</keyword>
<keyword id="KW-0689">Ribosomal protein</keyword>
<organism>
    <name type="scientific">Brucella abortus (strain 2308)</name>
    <dbReference type="NCBI Taxonomy" id="359391"/>
    <lineage>
        <taxon>Bacteria</taxon>
        <taxon>Pseudomonadati</taxon>
        <taxon>Pseudomonadota</taxon>
        <taxon>Alphaproteobacteria</taxon>
        <taxon>Hyphomicrobiales</taxon>
        <taxon>Brucellaceae</taxon>
        <taxon>Brucella/Ochrobactrum group</taxon>
        <taxon>Brucella</taxon>
    </lineage>
</organism>
<sequence>MPKMKTKSAAKKRFKITGTGKVKAAAAGKRHGMIKRSNKFIRDARGTMVLADADAKIVKQFLPNGL</sequence>
<comment type="similarity">
    <text evidence="1">Belongs to the bacterial ribosomal protein bL35 family.</text>
</comment>
<feature type="chain" id="PRO_0000258645" description="Large ribosomal subunit protein bL35">
    <location>
        <begin position="1"/>
        <end position="66"/>
    </location>
</feature>